<evidence type="ECO:0000255" key="1">
    <source>
        <dbReference type="HAMAP-Rule" id="MF_01151"/>
    </source>
</evidence>
<evidence type="ECO:0000256" key="2">
    <source>
        <dbReference type="SAM" id="MobiDB-lite"/>
    </source>
</evidence>
<organism>
    <name type="scientific">Paramagnetospirillum magneticum (strain ATCC 700264 / AMB-1)</name>
    <name type="common">Magnetospirillum magneticum</name>
    <dbReference type="NCBI Taxonomy" id="342108"/>
    <lineage>
        <taxon>Bacteria</taxon>
        <taxon>Pseudomonadati</taxon>
        <taxon>Pseudomonadota</taxon>
        <taxon>Alphaproteobacteria</taxon>
        <taxon>Rhodospirillales</taxon>
        <taxon>Magnetospirillaceae</taxon>
        <taxon>Paramagnetospirillum</taxon>
    </lineage>
</organism>
<comment type="function">
    <text evidence="1">Participates actively in the response to hyperosmotic and heat shock by preventing the aggregation of stress-denatured proteins, in association with DnaK and GrpE. It is the nucleotide exchange factor for DnaK and may function as a thermosensor. Unfolded proteins bind initially to DnaJ; upon interaction with the DnaJ-bound protein, DnaK hydrolyzes its bound ATP, resulting in the formation of a stable complex. GrpE releases ADP from DnaK; ATP binding to DnaK triggers the release of the substrate protein, thus completing the reaction cycle. Several rounds of ATP-dependent interactions between DnaJ, DnaK and GrpE are required for fully efficient folding.</text>
</comment>
<comment type="subunit">
    <text evidence="1">Homodimer.</text>
</comment>
<comment type="subcellular location">
    <subcellularLocation>
        <location evidence="1">Cytoplasm</location>
    </subcellularLocation>
</comment>
<comment type="similarity">
    <text evidence="1">Belongs to the GrpE family.</text>
</comment>
<sequence length="203" mass="21980">MTQDQTAEQMPAAESADQSADQGPAAESAAPPAVDSERIKELEAEIAKLKNDVLYAKAETENTRRRLEQQAEDRGRYAISNIAKDVLSVADNLRRALDSVPASAREGNESLTALTTGVEMTERELLATFERYGIKLVAAQGERFDPNLHQAMMEMEDPSQIEGTVVLVMQAGYTLHDRLLRPALVGVAKGGPKSGGNNVDTKV</sequence>
<protein>
    <recommendedName>
        <fullName evidence="1">Protein GrpE</fullName>
    </recommendedName>
    <alternativeName>
        <fullName evidence="1">HSP-70 cofactor</fullName>
    </alternativeName>
</protein>
<proteinExistence type="inferred from homology"/>
<keyword id="KW-0143">Chaperone</keyword>
<keyword id="KW-0963">Cytoplasm</keyword>
<keyword id="KW-0346">Stress response</keyword>
<feature type="chain" id="PRO_1000213670" description="Protein GrpE">
    <location>
        <begin position="1"/>
        <end position="203"/>
    </location>
</feature>
<feature type="region of interest" description="Disordered" evidence="2">
    <location>
        <begin position="1"/>
        <end position="38"/>
    </location>
</feature>
<reference key="1">
    <citation type="journal article" date="2005" name="DNA Res.">
        <title>Complete genome sequence of the facultative anaerobic magnetotactic bacterium Magnetospirillum sp. strain AMB-1.</title>
        <authorList>
            <person name="Matsunaga T."/>
            <person name="Okamura Y."/>
            <person name="Fukuda Y."/>
            <person name="Wahyudi A.T."/>
            <person name="Murase Y."/>
            <person name="Takeyama H."/>
        </authorList>
    </citation>
    <scope>NUCLEOTIDE SEQUENCE [LARGE SCALE GENOMIC DNA]</scope>
    <source>
        <strain>ATCC 700264 / AMB-1</strain>
    </source>
</reference>
<dbReference type="EMBL" id="AP007255">
    <property type="protein sequence ID" value="BAE53300.1"/>
    <property type="molecule type" value="Genomic_DNA"/>
</dbReference>
<dbReference type="RefSeq" id="WP_011386840.1">
    <property type="nucleotide sequence ID" value="NC_007626.1"/>
</dbReference>
<dbReference type="SMR" id="Q2VYM5"/>
<dbReference type="STRING" id="342108.amb4496"/>
<dbReference type="KEGG" id="mag:amb4496"/>
<dbReference type="HOGENOM" id="CLU_057217_0_2_5"/>
<dbReference type="OrthoDB" id="9789811at2"/>
<dbReference type="Proteomes" id="UP000007058">
    <property type="component" value="Chromosome"/>
</dbReference>
<dbReference type="GO" id="GO:0005737">
    <property type="term" value="C:cytoplasm"/>
    <property type="evidence" value="ECO:0007669"/>
    <property type="project" value="UniProtKB-SubCell"/>
</dbReference>
<dbReference type="GO" id="GO:0000774">
    <property type="term" value="F:adenyl-nucleotide exchange factor activity"/>
    <property type="evidence" value="ECO:0007669"/>
    <property type="project" value="InterPro"/>
</dbReference>
<dbReference type="GO" id="GO:0042803">
    <property type="term" value="F:protein homodimerization activity"/>
    <property type="evidence" value="ECO:0007669"/>
    <property type="project" value="InterPro"/>
</dbReference>
<dbReference type="GO" id="GO:0051087">
    <property type="term" value="F:protein-folding chaperone binding"/>
    <property type="evidence" value="ECO:0007669"/>
    <property type="project" value="InterPro"/>
</dbReference>
<dbReference type="GO" id="GO:0051082">
    <property type="term" value="F:unfolded protein binding"/>
    <property type="evidence" value="ECO:0007669"/>
    <property type="project" value="TreeGrafter"/>
</dbReference>
<dbReference type="GO" id="GO:0006457">
    <property type="term" value="P:protein folding"/>
    <property type="evidence" value="ECO:0007669"/>
    <property type="project" value="InterPro"/>
</dbReference>
<dbReference type="CDD" id="cd00446">
    <property type="entry name" value="GrpE"/>
    <property type="match status" value="1"/>
</dbReference>
<dbReference type="FunFam" id="2.30.22.10:FF:000001">
    <property type="entry name" value="Protein GrpE"/>
    <property type="match status" value="1"/>
</dbReference>
<dbReference type="Gene3D" id="3.90.20.20">
    <property type="match status" value="1"/>
</dbReference>
<dbReference type="Gene3D" id="2.30.22.10">
    <property type="entry name" value="Head domain of nucleotide exchange factor GrpE"/>
    <property type="match status" value="1"/>
</dbReference>
<dbReference type="HAMAP" id="MF_01151">
    <property type="entry name" value="GrpE"/>
    <property type="match status" value="1"/>
</dbReference>
<dbReference type="InterPro" id="IPR000740">
    <property type="entry name" value="GrpE"/>
</dbReference>
<dbReference type="InterPro" id="IPR013805">
    <property type="entry name" value="GrpE_coiled_coil"/>
</dbReference>
<dbReference type="InterPro" id="IPR009012">
    <property type="entry name" value="GrpE_head"/>
</dbReference>
<dbReference type="NCBIfam" id="NF010738">
    <property type="entry name" value="PRK14140.1"/>
    <property type="match status" value="1"/>
</dbReference>
<dbReference type="NCBIfam" id="NF010739">
    <property type="entry name" value="PRK14141.1"/>
    <property type="match status" value="1"/>
</dbReference>
<dbReference type="PANTHER" id="PTHR21237">
    <property type="entry name" value="GRPE PROTEIN"/>
    <property type="match status" value="1"/>
</dbReference>
<dbReference type="PANTHER" id="PTHR21237:SF23">
    <property type="entry name" value="GRPE PROTEIN HOMOLOG, MITOCHONDRIAL"/>
    <property type="match status" value="1"/>
</dbReference>
<dbReference type="Pfam" id="PF01025">
    <property type="entry name" value="GrpE"/>
    <property type="match status" value="1"/>
</dbReference>
<dbReference type="PRINTS" id="PR00773">
    <property type="entry name" value="GRPEPROTEIN"/>
</dbReference>
<dbReference type="SUPFAM" id="SSF58014">
    <property type="entry name" value="Coiled-coil domain of nucleotide exchange factor GrpE"/>
    <property type="match status" value="1"/>
</dbReference>
<dbReference type="SUPFAM" id="SSF51064">
    <property type="entry name" value="Head domain of nucleotide exchange factor GrpE"/>
    <property type="match status" value="1"/>
</dbReference>
<dbReference type="PROSITE" id="PS01071">
    <property type="entry name" value="GRPE"/>
    <property type="match status" value="1"/>
</dbReference>
<gene>
    <name evidence="1" type="primary">grpE</name>
    <name type="ordered locus">amb4496</name>
</gene>
<name>GRPE_PARM1</name>
<accession>Q2VYM5</accession>